<protein>
    <recommendedName>
        <fullName evidence="1">V-type proton ATPase subunit B</fullName>
        <shortName>V-ATPase subunit B</shortName>
    </recommendedName>
    <alternativeName>
        <fullName>Vacuolar proton pump subunit B</fullName>
    </alternativeName>
</protein>
<comment type="function">
    <text evidence="1">Non-catalytic subunit of the V1 complex of vacuolar(H+)-ATPase (V-ATPase), a multisubunit enzyme composed of a peripheral complex (V1) that hydrolyzes ATP and a membrane integral complex (V0) that translocates protons (By similarity). V-ATPase is responsible for acidifying and maintaining the pH of intracellular compartments (By similarity).</text>
</comment>
<comment type="subunit">
    <text evidence="1">V-ATPase is a heteromultimeric enzyme composed of a peripheral catalytic V1 complex (components A to H) attached to an integral membrane V0 proton pore complex (components: a, c, c', c'', d, e, f and VOA1).</text>
</comment>
<comment type="subcellular location">
    <subcellularLocation>
        <location evidence="1">Vacuole membrane</location>
        <topology evidence="4">Peripheral membrane protein</topology>
        <orientation evidence="4">Cytoplasmic side</orientation>
    </subcellularLocation>
</comment>
<comment type="developmental stage">
    <text evidence="3">Expressed in late sporogonial stages.</text>
</comment>
<comment type="similarity">
    <text evidence="4">Belongs to the ATPase alpha/beta chains family.</text>
</comment>
<accession>Q8SR34</accession>
<evidence type="ECO:0000250" key="1">
    <source>
        <dbReference type="UniProtKB" id="P16140"/>
    </source>
</evidence>
<evidence type="ECO:0000250" key="2">
    <source>
        <dbReference type="UniProtKB" id="P21281"/>
    </source>
</evidence>
<evidence type="ECO:0000269" key="3">
    <source>
    </source>
</evidence>
<evidence type="ECO:0000305" key="4"/>
<dbReference type="EMBL" id="AL590449">
    <property type="protein sequence ID" value="CAD25823.1"/>
    <property type="molecule type" value="Genomic_DNA"/>
</dbReference>
<dbReference type="RefSeq" id="NP_586219.1">
    <property type="nucleotide sequence ID" value="NM_001042052.1"/>
</dbReference>
<dbReference type="SMR" id="Q8SR34"/>
<dbReference type="FunCoup" id="Q8SR34">
    <property type="interactions" value="42"/>
</dbReference>
<dbReference type="STRING" id="284813.Q8SR34"/>
<dbReference type="GeneID" id="859868"/>
<dbReference type="KEGG" id="ecu:ECU10_1040"/>
<dbReference type="VEuPathDB" id="MicrosporidiaDB:ECU10_1040"/>
<dbReference type="HOGENOM" id="CLU_022916_3_0_1"/>
<dbReference type="InParanoid" id="Q8SR34"/>
<dbReference type="OMA" id="EGFKIKP"/>
<dbReference type="OrthoDB" id="1735853at2759"/>
<dbReference type="Proteomes" id="UP000000819">
    <property type="component" value="Chromosome X"/>
</dbReference>
<dbReference type="GO" id="GO:0000221">
    <property type="term" value="C:vacuolar proton-transporting V-type ATPase, V1 domain"/>
    <property type="evidence" value="ECO:0000250"/>
    <property type="project" value="UniProtKB"/>
</dbReference>
<dbReference type="GO" id="GO:0005524">
    <property type="term" value="F:ATP binding"/>
    <property type="evidence" value="ECO:0007669"/>
    <property type="project" value="UniProtKB-KW"/>
</dbReference>
<dbReference type="GO" id="GO:0046961">
    <property type="term" value="F:proton-transporting ATPase activity, rotational mechanism"/>
    <property type="evidence" value="ECO:0007669"/>
    <property type="project" value="InterPro"/>
</dbReference>
<dbReference type="GO" id="GO:0046034">
    <property type="term" value="P:ATP metabolic process"/>
    <property type="evidence" value="ECO:0007669"/>
    <property type="project" value="InterPro"/>
</dbReference>
<dbReference type="GO" id="GO:0007035">
    <property type="term" value="P:vacuolar acidification"/>
    <property type="evidence" value="ECO:0007669"/>
    <property type="project" value="TreeGrafter"/>
</dbReference>
<dbReference type="CDD" id="cd18112">
    <property type="entry name" value="ATP-synt_V_A-type_beta_C"/>
    <property type="match status" value="1"/>
</dbReference>
<dbReference type="CDD" id="cd18118">
    <property type="entry name" value="ATP-synt_V_A-type_beta_N"/>
    <property type="match status" value="1"/>
</dbReference>
<dbReference type="CDD" id="cd01135">
    <property type="entry name" value="V_A-ATPase_B"/>
    <property type="match status" value="1"/>
</dbReference>
<dbReference type="FunFam" id="3.40.50.12240:FF:000001">
    <property type="entry name" value="V-type proton ATPase subunit B, brain"/>
    <property type="match status" value="1"/>
</dbReference>
<dbReference type="Gene3D" id="3.40.50.12240">
    <property type="match status" value="1"/>
</dbReference>
<dbReference type="HAMAP" id="MF_00310">
    <property type="entry name" value="ATP_synth_B_arch"/>
    <property type="match status" value="1"/>
</dbReference>
<dbReference type="InterPro" id="IPR055190">
    <property type="entry name" value="ATP-synt_VA_C"/>
</dbReference>
<dbReference type="InterPro" id="IPR020003">
    <property type="entry name" value="ATPase_a/bsu_AS"/>
</dbReference>
<dbReference type="InterPro" id="IPR004100">
    <property type="entry name" value="ATPase_F1/V1/A1_a/bsu_N"/>
</dbReference>
<dbReference type="InterPro" id="IPR000194">
    <property type="entry name" value="ATPase_F1/V1/A1_a/bsu_nucl-bd"/>
</dbReference>
<dbReference type="InterPro" id="IPR005723">
    <property type="entry name" value="ATPase_V1-cplx_bsu"/>
</dbReference>
<dbReference type="InterPro" id="IPR027417">
    <property type="entry name" value="P-loop_NTPase"/>
</dbReference>
<dbReference type="InterPro" id="IPR022879">
    <property type="entry name" value="V-ATPase_su_B/beta"/>
</dbReference>
<dbReference type="NCBIfam" id="NF003235">
    <property type="entry name" value="PRK04196.1"/>
    <property type="match status" value="1"/>
</dbReference>
<dbReference type="NCBIfam" id="TIGR01040">
    <property type="entry name" value="V-ATPase_V1_B"/>
    <property type="match status" value="1"/>
</dbReference>
<dbReference type="PANTHER" id="PTHR43389">
    <property type="entry name" value="V-TYPE PROTON ATPASE SUBUNIT B"/>
    <property type="match status" value="1"/>
</dbReference>
<dbReference type="PANTHER" id="PTHR43389:SF4">
    <property type="entry name" value="V-TYPE PROTON ATPASE SUBUNIT B"/>
    <property type="match status" value="1"/>
</dbReference>
<dbReference type="Pfam" id="PF00006">
    <property type="entry name" value="ATP-synt_ab"/>
    <property type="match status" value="1"/>
</dbReference>
<dbReference type="Pfam" id="PF02874">
    <property type="entry name" value="ATP-synt_ab_N"/>
    <property type="match status" value="1"/>
</dbReference>
<dbReference type="Pfam" id="PF22919">
    <property type="entry name" value="ATP-synt_VA_C"/>
    <property type="match status" value="1"/>
</dbReference>
<dbReference type="PIRSF" id="PIRSF039114">
    <property type="entry name" value="V-ATPsynth_beta/V-ATPase_B"/>
    <property type="match status" value="1"/>
</dbReference>
<dbReference type="SUPFAM" id="SSF52540">
    <property type="entry name" value="P-loop containing nucleoside triphosphate hydrolases"/>
    <property type="match status" value="1"/>
</dbReference>
<dbReference type="PROSITE" id="PS00152">
    <property type="entry name" value="ATPASE_ALPHA_BETA"/>
    <property type="match status" value="1"/>
</dbReference>
<reference key="1">
    <citation type="journal article" date="2001" name="Nature">
        <title>Genome sequence and gene compaction of the eukaryote parasite Encephalitozoon cuniculi.</title>
        <authorList>
            <person name="Katinka M.D."/>
            <person name="Duprat S."/>
            <person name="Cornillot E."/>
            <person name="Metenier G."/>
            <person name="Thomarat F."/>
            <person name="Prensier G."/>
            <person name="Barbe V."/>
            <person name="Peyretaillade E."/>
            <person name="Brottier P."/>
            <person name="Wincker P."/>
            <person name="Delbac F."/>
            <person name="El Alaoui H."/>
            <person name="Peyret P."/>
            <person name="Saurin W."/>
            <person name="Gouy M."/>
            <person name="Weissenbach J."/>
            <person name="Vivares C.P."/>
        </authorList>
    </citation>
    <scope>NUCLEOTIDE SEQUENCE [LARGE SCALE GENOMIC DNA]</scope>
    <source>
        <strain>GB-M1</strain>
    </source>
</reference>
<reference key="2">
    <citation type="journal article" date="2006" name="Proteomics">
        <title>Proteomic analysis of the eukaryotic parasite Encephalitozoon cuniculi (microsporidia): a reference map for proteins expressed in late sporogonial stages.</title>
        <authorList>
            <person name="Brosson D."/>
            <person name="Kuhn L."/>
            <person name="Delbac F."/>
            <person name="Garin J."/>
            <person name="Vivares C.P."/>
            <person name="Texier C."/>
        </authorList>
    </citation>
    <scope>IDENTIFICATION BY MASS SPECTROMETRY [LARGE SCALE ANALYSIS]</scope>
    <scope>DEVELOPMENTAL STAGE</scope>
</reference>
<organism>
    <name type="scientific">Encephalitozoon cuniculi (strain GB-M1)</name>
    <name type="common">Microsporidian parasite</name>
    <dbReference type="NCBI Taxonomy" id="284813"/>
    <lineage>
        <taxon>Eukaryota</taxon>
        <taxon>Fungi</taxon>
        <taxon>Fungi incertae sedis</taxon>
        <taxon>Microsporidia</taxon>
        <taxon>Unikaryonidae</taxon>
        <taxon>Encephalitozoon</taxon>
    </lineage>
</organism>
<gene>
    <name evidence="1" type="primary">VMA2</name>
    <name type="ordered locus">ECU10_1040</name>
</gene>
<keyword id="KW-0067">ATP-binding</keyword>
<keyword id="KW-0375">Hydrogen ion transport</keyword>
<keyword id="KW-0406">Ion transport</keyword>
<keyword id="KW-0472">Membrane</keyword>
<keyword id="KW-0547">Nucleotide-binding</keyword>
<keyword id="KW-1185">Reference proteome</keyword>
<keyword id="KW-0813">Transport</keyword>
<keyword id="KW-0926">Vacuole</keyword>
<proteinExistence type="evidence at protein level"/>
<sequence>MLESVRIEPKMSYRKIVGVNGPLVIMDNIRFLKYAEMVSLTLPDGSVRQGQVLEVSGKKAVIQVFEGTAGIDVKETQVTFTGETMKMGMSEDVLGRIFNGSGRVIDGGPKIIPEDYLDIQGQPLNPYARIYPEEMIQTGISSIDVMNSIARGQKIPIFSASGLPHNEIAAQICRQAGLVKRKDSIDSSDDNFAIVFAAMGVNVETANFFRNSFEASGSIGRTALFLNLANDPTIERIITPRLALTAAEYLAYEREKHVLVIMTDMSSYADALREVSAAREEVPGRRGYPGYMYTDLSTIYERAGRLEGRNGSITQIPILTMPNDDITHPIPDLTGYITEGQIYVDRQMHNRQIYPPINVLPSLSRLMKSAIGEGMTRKDHGDVSNQLYAKYAIGKDAQAMKAVVGEDSLSAEDRISIEFLERFEREFISQRHDELRTVDQSLDIAWDLLKVFPREMLNRIPSDILDEFHSVAPVGVE</sequence>
<feature type="chain" id="PRO_0000383328" description="V-type proton ATPase subunit B">
    <location>
        <begin position="1"/>
        <end position="477"/>
    </location>
</feature>
<feature type="binding site" evidence="2">
    <location>
        <position position="365"/>
    </location>
    <ligand>
        <name>ATP</name>
        <dbReference type="ChEBI" id="CHEBI:30616"/>
    </ligand>
</feature>
<name>VATB_ENCCU</name>